<evidence type="ECO:0000255" key="1">
    <source>
        <dbReference type="HAMAP-Rule" id="MF_02006"/>
    </source>
</evidence>
<reference key="1">
    <citation type="journal article" date="2007" name="PLoS ONE">
        <title>Paradoxical DNA repair and peroxide resistance gene conservation in Bacillus pumilus SAFR-032.</title>
        <authorList>
            <person name="Gioia J."/>
            <person name="Yerrapragada S."/>
            <person name="Qin X."/>
            <person name="Jiang H."/>
            <person name="Igboeli O.C."/>
            <person name="Muzny D."/>
            <person name="Dugan-Rocha S."/>
            <person name="Ding Y."/>
            <person name="Hawes A."/>
            <person name="Liu W."/>
            <person name="Perez L."/>
            <person name="Kovar C."/>
            <person name="Dinh H."/>
            <person name="Lee S."/>
            <person name="Nazareth L."/>
            <person name="Blyth P."/>
            <person name="Holder M."/>
            <person name="Buhay C."/>
            <person name="Tirumalai M.R."/>
            <person name="Liu Y."/>
            <person name="Dasgupta I."/>
            <person name="Bokhetache L."/>
            <person name="Fujita M."/>
            <person name="Karouia F."/>
            <person name="Eswara Moorthy P."/>
            <person name="Siefert J."/>
            <person name="Uzman A."/>
            <person name="Buzumbo P."/>
            <person name="Verma A."/>
            <person name="Zwiya H."/>
            <person name="McWilliams B.D."/>
            <person name="Olowu A."/>
            <person name="Clinkenbeard K.D."/>
            <person name="Newcombe D."/>
            <person name="Golebiewski L."/>
            <person name="Petrosino J.F."/>
            <person name="Nicholson W.L."/>
            <person name="Fox G.E."/>
            <person name="Venkateswaran K."/>
            <person name="Highlander S.K."/>
            <person name="Weinstock G.M."/>
        </authorList>
    </citation>
    <scope>NUCLEOTIDE SEQUENCE [LARGE SCALE GENOMIC DNA]</scope>
    <source>
        <strain>SAFR-032</strain>
    </source>
</reference>
<feature type="chain" id="PRO_1000088577" description="Tyrosine--tRNA ligase">
    <location>
        <begin position="1"/>
        <end position="422"/>
    </location>
</feature>
<feature type="domain" description="S4 RNA-binding" evidence="1">
    <location>
        <begin position="355"/>
        <end position="421"/>
    </location>
</feature>
<feature type="short sequence motif" description="'HIGH' region">
    <location>
        <begin position="40"/>
        <end position="49"/>
    </location>
</feature>
<feature type="short sequence motif" description="'KMSKS' region">
    <location>
        <begin position="232"/>
        <end position="236"/>
    </location>
</feature>
<feature type="binding site" evidence="1">
    <location>
        <position position="35"/>
    </location>
    <ligand>
        <name>L-tyrosine</name>
        <dbReference type="ChEBI" id="CHEBI:58315"/>
    </ligand>
</feature>
<feature type="binding site" evidence="1">
    <location>
        <position position="170"/>
    </location>
    <ligand>
        <name>L-tyrosine</name>
        <dbReference type="ChEBI" id="CHEBI:58315"/>
    </ligand>
</feature>
<feature type="binding site" evidence="1">
    <location>
        <position position="174"/>
    </location>
    <ligand>
        <name>L-tyrosine</name>
        <dbReference type="ChEBI" id="CHEBI:58315"/>
    </ligand>
</feature>
<feature type="binding site" evidence="1">
    <location>
        <position position="235"/>
    </location>
    <ligand>
        <name>ATP</name>
        <dbReference type="ChEBI" id="CHEBI:30616"/>
    </ligand>
</feature>
<gene>
    <name evidence="1" type="primary">tyrS</name>
    <name type="ordered locus">BPUM_2615</name>
</gene>
<comment type="function">
    <text evidence="1">Catalyzes the attachment of tyrosine to tRNA(Tyr) in a two-step reaction: tyrosine is first activated by ATP to form Tyr-AMP and then transferred to the acceptor end of tRNA(Tyr).</text>
</comment>
<comment type="catalytic activity">
    <reaction evidence="1">
        <text>tRNA(Tyr) + L-tyrosine + ATP = L-tyrosyl-tRNA(Tyr) + AMP + diphosphate + H(+)</text>
        <dbReference type="Rhea" id="RHEA:10220"/>
        <dbReference type="Rhea" id="RHEA-COMP:9706"/>
        <dbReference type="Rhea" id="RHEA-COMP:9707"/>
        <dbReference type="ChEBI" id="CHEBI:15378"/>
        <dbReference type="ChEBI" id="CHEBI:30616"/>
        <dbReference type="ChEBI" id="CHEBI:33019"/>
        <dbReference type="ChEBI" id="CHEBI:58315"/>
        <dbReference type="ChEBI" id="CHEBI:78442"/>
        <dbReference type="ChEBI" id="CHEBI:78536"/>
        <dbReference type="ChEBI" id="CHEBI:456215"/>
        <dbReference type="EC" id="6.1.1.1"/>
    </reaction>
</comment>
<comment type="subunit">
    <text evidence="1">Homodimer.</text>
</comment>
<comment type="subcellular location">
    <subcellularLocation>
        <location evidence="1">Cytoplasm</location>
    </subcellularLocation>
</comment>
<comment type="similarity">
    <text evidence="1">Belongs to the class-I aminoacyl-tRNA synthetase family. TyrS type 1 subfamily.</text>
</comment>
<dbReference type="EC" id="6.1.1.1" evidence="1"/>
<dbReference type="EMBL" id="CP000813">
    <property type="protein sequence ID" value="ABV63273.1"/>
    <property type="molecule type" value="Genomic_DNA"/>
</dbReference>
<dbReference type="RefSeq" id="WP_012010909.1">
    <property type="nucleotide sequence ID" value="NC_009848.4"/>
</dbReference>
<dbReference type="SMR" id="A8FGA6"/>
<dbReference type="STRING" id="315750.BPUM_2615"/>
<dbReference type="GeneID" id="5621880"/>
<dbReference type="KEGG" id="bpu:BPUM_2615"/>
<dbReference type="eggNOG" id="COG0162">
    <property type="taxonomic scope" value="Bacteria"/>
</dbReference>
<dbReference type="HOGENOM" id="CLU_024003_0_3_9"/>
<dbReference type="OrthoDB" id="9804243at2"/>
<dbReference type="Proteomes" id="UP000001355">
    <property type="component" value="Chromosome"/>
</dbReference>
<dbReference type="GO" id="GO:0005829">
    <property type="term" value="C:cytosol"/>
    <property type="evidence" value="ECO:0007669"/>
    <property type="project" value="TreeGrafter"/>
</dbReference>
<dbReference type="GO" id="GO:0005524">
    <property type="term" value="F:ATP binding"/>
    <property type="evidence" value="ECO:0007669"/>
    <property type="project" value="UniProtKB-UniRule"/>
</dbReference>
<dbReference type="GO" id="GO:0003723">
    <property type="term" value="F:RNA binding"/>
    <property type="evidence" value="ECO:0007669"/>
    <property type="project" value="UniProtKB-KW"/>
</dbReference>
<dbReference type="GO" id="GO:0004831">
    <property type="term" value="F:tyrosine-tRNA ligase activity"/>
    <property type="evidence" value="ECO:0007669"/>
    <property type="project" value="UniProtKB-UniRule"/>
</dbReference>
<dbReference type="GO" id="GO:0006437">
    <property type="term" value="P:tyrosyl-tRNA aminoacylation"/>
    <property type="evidence" value="ECO:0007669"/>
    <property type="project" value="UniProtKB-UniRule"/>
</dbReference>
<dbReference type="CDD" id="cd00165">
    <property type="entry name" value="S4"/>
    <property type="match status" value="1"/>
</dbReference>
<dbReference type="CDD" id="cd00395">
    <property type="entry name" value="Tyr_Trp_RS_core"/>
    <property type="match status" value="1"/>
</dbReference>
<dbReference type="FunFam" id="1.10.240.10:FF:000001">
    <property type="entry name" value="Tyrosine--tRNA ligase"/>
    <property type="match status" value="1"/>
</dbReference>
<dbReference type="FunFam" id="3.40.50.620:FF:000008">
    <property type="entry name" value="Tyrosine--tRNA ligase"/>
    <property type="match status" value="1"/>
</dbReference>
<dbReference type="Gene3D" id="3.40.50.620">
    <property type="entry name" value="HUPs"/>
    <property type="match status" value="1"/>
</dbReference>
<dbReference type="Gene3D" id="3.10.290.10">
    <property type="entry name" value="RNA-binding S4 domain"/>
    <property type="match status" value="1"/>
</dbReference>
<dbReference type="Gene3D" id="1.10.240.10">
    <property type="entry name" value="Tyrosyl-Transfer RNA Synthetase"/>
    <property type="match status" value="1"/>
</dbReference>
<dbReference type="HAMAP" id="MF_02006">
    <property type="entry name" value="Tyr_tRNA_synth_type1"/>
    <property type="match status" value="1"/>
</dbReference>
<dbReference type="InterPro" id="IPR001412">
    <property type="entry name" value="aa-tRNA-synth_I_CS"/>
</dbReference>
<dbReference type="InterPro" id="IPR002305">
    <property type="entry name" value="aa-tRNA-synth_Ic"/>
</dbReference>
<dbReference type="InterPro" id="IPR014729">
    <property type="entry name" value="Rossmann-like_a/b/a_fold"/>
</dbReference>
<dbReference type="InterPro" id="IPR002942">
    <property type="entry name" value="S4_RNA-bd"/>
</dbReference>
<dbReference type="InterPro" id="IPR036986">
    <property type="entry name" value="S4_RNA-bd_sf"/>
</dbReference>
<dbReference type="InterPro" id="IPR054608">
    <property type="entry name" value="SYY-like_C"/>
</dbReference>
<dbReference type="InterPro" id="IPR002307">
    <property type="entry name" value="Tyr-tRNA-ligase"/>
</dbReference>
<dbReference type="InterPro" id="IPR024088">
    <property type="entry name" value="Tyr-tRNA-ligase_bac-type"/>
</dbReference>
<dbReference type="InterPro" id="IPR024107">
    <property type="entry name" value="Tyr-tRNA-ligase_bac_1"/>
</dbReference>
<dbReference type="NCBIfam" id="TIGR00234">
    <property type="entry name" value="tyrS"/>
    <property type="match status" value="1"/>
</dbReference>
<dbReference type="PANTHER" id="PTHR11766:SF0">
    <property type="entry name" value="TYROSINE--TRNA LIGASE, MITOCHONDRIAL"/>
    <property type="match status" value="1"/>
</dbReference>
<dbReference type="PANTHER" id="PTHR11766">
    <property type="entry name" value="TYROSYL-TRNA SYNTHETASE"/>
    <property type="match status" value="1"/>
</dbReference>
<dbReference type="Pfam" id="PF22421">
    <property type="entry name" value="SYY_C-terminal"/>
    <property type="match status" value="1"/>
</dbReference>
<dbReference type="Pfam" id="PF00579">
    <property type="entry name" value="tRNA-synt_1b"/>
    <property type="match status" value="1"/>
</dbReference>
<dbReference type="PRINTS" id="PR01040">
    <property type="entry name" value="TRNASYNTHTYR"/>
</dbReference>
<dbReference type="SMART" id="SM00363">
    <property type="entry name" value="S4"/>
    <property type="match status" value="1"/>
</dbReference>
<dbReference type="SUPFAM" id="SSF55174">
    <property type="entry name" value="Alpha-L RNA-binding motif"/>
    <property type="match status" value="1"/>
</dbReference>
<dbReference type="SUPFAM" id="SSF52374">
    <property type="entry name" value="Nucleotidylyl transferase"/>
    <property type="match status" value="1"/>
</dbReference>
<dbReference type="PROSITE" id="PS00178">
    <property type="entry name" value="AA_TRNA_LIGASE_I"/>
    <property type="match status" value="1"/>
</dbReference>
<dbReference type="PROSITE" id="PS50889">
    <property type="entry name" value="S4"/>
    <property type="match status" value="1"/>
</dbReference>
<organism>
    <name type="scientific">Bacillus pumilus (strain SAFR-032)</name>
    <dbReference type="NCBI Taxonomy" id="315750"/>
    <lineage>
        <taxon>Bacteria</taxon>
        <taxon>Bacillati</taxon>
        <taxon>Bacillota</taxon>
        <taxon>Bacilli</taxon>
        <taxon>Bacillales</taxon>
        <taxon>Bacillaceae</taxon>
        <taxon>Bacillus</taxon>
    </lineage>
</organism>
<keyword id="KW-0030">Aminoacyl-tRNA synthetase</keyword>
<keyword id="KW-0067">ATP-binding</keyword>
<keyword id="KW-0963">Cytoplasm</keyword>
<keyword id="KW-0436">Ligase</keyword>
<keyword id="KW-0547">Nucleotide-binding</keyword>
<keyword id="KW-0648">Protein biosynthesis</keyword>
<keyword id="KW-0694">RNA-binding</keyword>
<name>SYY_BACP2</name>
<protein>
    <recommendedName>
        <fullName evidence="1">Tyrosine--tRNA ligase</fullName>
        <ecNumber evidence="1">6.1.1.1</ecNumber>
    </recommendedName>
    <alternativeName>
        <fullName evidence="1">Tyrosyl-tRNA synthetase</fullName>
        <shortName evidence="1">TyrRS</shortName>
    </alternativeName>
</protein>
<proteinExistence type="inferred from homology"/>
<accession>A8FGA6</accession>
<sequence>MSQLMEELSFRGLIQQQTDEEGLTKLLAEEKIKLYSGFDPTADSLHIGHLLPILTLRRFQEAGHHPIALVGGATGLIGDPSFKKAERSLNPAEIVEHWSDKIKGQLSQFLDFEAGENPAVIVNNYDWISQMNVITFLRDIGKNFGVNFMLAKDIVSSRIETGISYTEFSYVILQSLDFLNLYRNENCKLQIGGSDQWGNITSGLELIRKSEAEGAKAFGLTMPLVTKADGTKFGKTEGGAIWLDKEKTSPYEFYQFWINTDDRDVVKYLKYFTFLSKEEIASYEEKVQTAPEKREAQRRLAEEVTTLVHGRESLEQAVNISNALFKGEIKSLSAEEVKVGFKDVPSMEKSSTEELTLVDLLVESKLSPSKRQAREDITNGAVSINGERQTDKDYVLSAEDRIENQFTVLRRGKKKYFLVTYK</sequence>